<comment type="function">
    <text evidence="1">Catalyzes 2 different reactions between oxygen and the acireductone 1,2-dihydroxy-3-keto-5-methylthiopentene (DHK-MTPene) depending upon the metal bound in the active site. Fe-containing acireductone dioxygenase (Fe-ARD) produces formate and 2-keto-4-methylthiobutyrate (KMTB), the alpha-ketoacid precursor of methionine in the methionine recycle pathway. Ni-containing acireductone dioxygenase (Ni-ARD) produces methylthiopropionate, carbon monoxide and formate, and does not lie on the methionine recycle pathway.</text>
</comment>
<comment type="catalytic activity">
    <reaction evidence="1">
        <text>1,2-dihydroxy-5-(methylsulfanyl)pent-1-en-3-one + O2 = 3-(methylsulfanyl)propanoate + CO + formate + 2 H(+)</text>
        <dbReference type="Rhea" id="RHEA:14161"/>
        <dbReference type="ChEBI" id="CHEBI:15378"/>
        <dbReference type="ChEBI" id="CHEBI:15379"/>
        <dbReference type="ChEBI" id="CHEBI:15740"/>
        <dbReference type="ChEBI" id="CHEBI:17245"/>
        <dbReference type="ChEBI" id="CHEBI:49016"/>
        <dbReference type="ChEBI" id="CHEBI:49252"/>
        <dbReference type="EC" id="1.13.11.53"/>
    </reaction>
</comment>
<comment type="catalytic activity">
    <reaction evidence="1">
        <text>1,2-dihydroxy-5-(methylsulfanyl)pent-1-en-3-one + O2 = 4-methylsulfanyl-2-oxobutanoate + formate + 2 H(+)</text>
        <dbReference type="Rhea" id="RHEA:24504"/>
        <dbReference type="ChEBI" id="CHEBI:15378"/>
        <dbReference type="ChEBI" id="CHEBI:15379"/>
        <dbReference type="ChEBI" id="CHEBI:15740"/>
        <dbReference type="ChEBI" id="CHEBI:16723"/>
        <dbReference type="ChEBI" id="CHEBI:49252"/>
        <dbReference type="EC" id="1.13.11.54"/>
    </reaction>
</comment>
<comment type="cofactor">
    <cofactor evidence="1">
        <name>Fe(2+)</name>
        <dbReference type="ChEBI" id="CHEBI:29033"/>
    </cofactor>
    <text evidence="1">Binds 1 Fe(2+) cation per monomer.</text>
</comment>
<comment type="cofactor">
    <cofactor evidence="1">
        <name>Ni(2+)</name>
        <dbReference type="ChEBI" id="CHEBI:49786"/>
    </cofactor>
    <text evidence="1">Binds 1 nickel ion per monomer.</text>
</comment>
<comment type="pathway">
    <text evidence="1">Amino-acid biosynthesis; L-methionine biosynthesis via salvage pathway; L-methionine from S-methyl-5-thio-alpha-D-ribose 1-phosphate: step 5/6.</text>
</comment>
<comment type="subunit">
    <text evidence="1">Monomer.</text>
</comment>
<comment type="similarity">
    <text evidence="1">Belongs to the acireductone dioxygenase (ARD) family.</text>
</comment>
<name>MTND_STRM5</name>
<sequence>MSRLRIYDDTRPESPLLDTQDGAIIAAELQKIGVTFERWQATAPVAPGASQEEVFAAYRADIDRLVAERGFKSVDVASIAPDNPNRAELRRKFLDEHFHKEDEVRFFVAGSGLFTLHVGDKVYEIECVKDDLIAVPDGTTHWFDMGDEPSFVAIRFFTEPDGWVGHFTGTDIAQKFPRYVPTQAS</sequence>
<protein>
    <recommendedName>
        <fullName evidence="1">Acireductone dioxygenase</fullName>
    </recommendedName>
    <alternativeName>
        <fullName evidence="1">1,2-dihydroxy-3-keto-5-methylthiopentene dioxygenase</fullName>
        <shortName evidence="1">DHK-MTPene dioxygenase</shortName>
    </alternativeName>
    <alternativeName>
        <fullName evidence="1">Acireductone dioxygenase (Fe(2+)-requiring)</fullName>
        <shortName evidence="1">ARD'</shortName>
        <shortName evidence="1">Fe-ARD</shortName>
        <ecNumber evidence="1">1.13.11.54</ecNumber>
    </alternativeName>
    <alternativeName>
        <fullName evidence="1">Acireductone dioxygenase (Ni(2+)-requiring)</fullName>
        <shortName evidence="1">ARD</shortName>
        <shortName evidence="1">Ni-ARD</shortName>
        <ecNumber evidence="1">1.13.11.53</ecNumber>
    </alternativeName>
</protein>
<reference key="1">
    <citation type="submission" date="2008-06" db="EMBL/GenBank/DDBJ databases">
        <title>Complete sequence of Stenotrophomonas maltophilia R551-3.</title>
        <authorList>
            <consortium name="US DOE Joint Genome Institute"/>
            <person name="Lucas S."/>
            <person name="Copeland A."/>
            <person name="Lapidus A."/>
            <person name="Glavina del Rio T."/>
            <person name="Dalin E."/>
            <person name="Tice H."/>
            <person name="Pitluck S."/>
            <person name="Chain P."/>
            <person name="Malfatti S."/>
            <person name="Shin M."/>
            <person name="Vergez L."/>
            <person name="Lang D."/>
            <person name="Schmutz J."/>
            <person name="Larimer F."/>
            <person name="Land M."/>
            <person name="Hauser L."/>
            <person name="Kyrpides N."/>
            <person name="Mikhailova N."/>
            <person name="Taghavi S."/>
            <person name="Monchy S."/>
            <person name="Newman L."/>
            <person name="Vangronsveld J."/>
            <person name="van der Lelie D."/>
            <person name="Richardson P."/>
        </authorList>
    </citation>
    <scope>NUCLEOTIDE SEQUENCE [LARGE SCALE GENOMIC DNA]</scope>
    <source>
        <strain>R551-3</strain>
    </source>
</reference>
<accession>B4STR1</accession>
<keyword id="KW-0028">Amino-acid biosynthesis</keyword>
<keyword id="KW-0223">Dioxygenase</keyword>
<keyword id="KW-0408">Iron</keyword>
<keyword id="KW-0479">Metal-binding</keyword>
<keyword id="KW-0486">Methionine biosynthesis</keyword>
<keyword id="KW-0533">Nickel</keyword>
<keyword id="KW-0560">Oxidoreductase</keyword>
<feature type="chain" id="PRO_0000359233" description="Acireductone dioxygenase">
    <location>
        <begin position="1"/>
        <end position="185"/>
    </location>
</feature>
<feature type="binding site" evidence="1">
    <location>
        <position position="97"/>
    </location>
    <ligand>
        <name>Fe(2+)</name>
        <dbReference type="ChEBI" id="CHEBI:29033"/>
    </ligand>
</feature>
<feature type="binding site" evidence="1">
    <location>
        <position position="97"/>
    </location>
    <ligand>
        <name>Ni(2+)</name>
        <dbReference type="ChEBI" id="CHEBI:49786"/>
    </ligand>
</feature>
<feature type="binding site" evidence="1">
    <location>
        <position position="99"/>
    </location>
    <ligand>
        <name>Fe(2+)</name>
        <dbReference type="ChEBI" id="CHEBI:29033"/>
    </ligand>
</feature>
<feature type="binding site" evidence="1">
    <location>
        <position position="99"/>
    </location>
    <ligand>
        <name>Ni(2+)</name>
        <dbReference type="ChEBI" id="CHEBI:49786"/>
    </ligand>
</feature>
<feature type="binding site" evidence="1">
    <location>
        <position position="103"/>
    </location>
    <ligand>
        <name>Fe(2+)</name>
        <dbReference type="ChEBI" id="CHEBI:29033"/>
    </ligand>
</feature>
<feature type="binding site" evidence="1">
    <location>
        <position position="103"/>
    </location>
    <ligand>
        <name>Ni(2+)</name>
        <dbReference type="ChEBI" id="CHEBI:49786"/>
    </ligand>
</feature>
<feature type="binding site" evidence="1">
    <location>
        <position position="141"/>
    </location>
    <ligand>
        <name>Fe(2+)</name>
        <dbReference type="ChEBI" id="CHEBI:29033"/>
    </ligand>
</feature>
<feature type="binding site" evidence="1">
    <location>
        <position position="141"/>
    </location>
    <ligand>
        <name>Ni(2+)</name>
        <dbReference type="ChEBI" id="CHEBI:49786"/>
    </ligand>
</feature>
<feature type="site" description="May play a role in metal incorporation in vivo" evidence="1">
    <location>
        <position position="96"/>
    </location>
</feature>
<feature type="site" description="May play a role in transmitting local conformational changes" evidence="1">
    <location>
        <position position="102"/>
    </location>
</feature>
<feature type="site" description="Important to generate the dianion" evidence="1">
    <location>
        <position position="105"/>
    </location>
</feature>
<dbReference type="EC" id="1.13.11.54" evidence="1"/>
<dbReference type="EC" id="1.13.11.53" evidence="1"/>
<dbReference type="EMBL" id="CP001111">
    <property type="protein sequence ID" value="ACF51485.1"/>
    <property type="molecule type" value="Genomic_DNA"/>
</dbReference>
<dbReference type="RefSeq" id="WP_012510903.1">
    <property type="nucleotide sequence ID" value="NC_011071.1"/>
</dbReference>
<dbReference type="SMR" id="B4STR1"/>
<dbReference type="STRING" id="391008.Smal_1781"/>
<dbReference type="KEGG" id="smt:Smal_1781"/>
<dbReference type="eggNOG" id="COG1791">
    <property type="taxonomic scope" value="Bacteria"/>
</dbReference>
<dbReference type="HOGENOM" id="CLU_125400_0_0_6"/>
<dbReference type="OrthoDB" id="9795636at2"/>
<dbReference type="UniPathway" id="UPA00904">
    <property type="reaction ID" value="UER00878"/>
</dbReference>
<dbReference type="Proteomes" id="UP000001867">
    <property type="component" value="Chromosome"/>
</dbReference>
<dbReference type="GO" id="GO:0010308">
    <property type="term" value="F:acireductone dioxygenase (Ni2+-requiring) activity"/>
    <property type="evidence" value="ECO:0007669"/>
    <property type="project" value="UniProtKB-UniRule"/>
</dbReference>
<dbReference type="GO" id="GO:0010309">
    <property type="term" value="F:acireductone dioxygenase [iron(II)-requiring] activity"/>
    <property type="evidence" value="ECO:0007669"/>
    <property type="project" value="UniProtKB-UniRule"/>
</dbReference>
<dbReference type="GO" id="GO:0005506">
    <property type="term" value="F:iron ion binding"/>
    <property type="evidence" value="ECO:0007669"/>
    <property type="project" value="UniProtKB-UniRule"/>
</dbReference>
<dbReference type="GO" id="GO:0016151">
    <property type="term" value="F:nickel cation binding"/>
    <property type="evidence" value="ECO:0007669"/>
    <property type="project" value="UniProtKB-UniRule"/>
</dbReference>
<dbReference type="GO" id="GO:0019509">
    <property type="term" value="P:L-methionine salvage from methylthioadenosine"/>
    <property type="evidence" value="ECO:0007669"/>
    <property type="project" value="UniProtKB-UniRule"/>
</dbReference>
<dbReference type="GO" id="GO:0019284">
    <property type="term" value="P:L-methionine salvage from S-adenosylmethionine"/>
    <property type="evidence" value="ECO:0007669"/>
    <property type="project" value="InterPro"/>
</dbReference>
<dbReference type="CDD" id="cd02232">
    <property type="entry name" value="cupin_ARD"/>
    <property type="match status" value="1"/>
</dbReference>
<dbReference type="Gene3D" id="2.60.120.10">
    <property type="entry name" value="Jelly Rolls"/>
    <property type="match status" value="1"/>
</dbReference>
<dbReference type="HAMAP" id="MF_01682">
    <property type="entry name" value="Salvage_MtnD"/>
    <property type="match status" value="1"/>
</dbReference>
<dbReference type="InterPro" id="IPR004313">
    <property type="entry name" value="ARD"/>
</dbReference>
<dbReference type="InterPro" id="IPR023956">
    <property type="entry name" value="ARD_bac"/>
</dbReference>
<dbReference type="InterPro" id="IPR014710">
    <property type="entry name" value="RmlC-like_jellyroll"/>
</dbReference>
<dbReference type="InterPro" id="IPR011051">
    <property type="entry name" value="RmlC_Cupin_sf"/>
</dbReference>
<dbReference type="PANTHER" id="PTHR23418">
    <property type="entry name" value="ACIREDUCTONE DIOXYGENASE"/>
    <property type="match status" value="1"/>
</dbReference>
<dbReference type="PANTHER" id="PTHR23418:SF0">
    <property type="entry name" value="ACIREDUCTONE DIOXYGENASE"/>
    <property type="match status" value="1"/>
</dbReference>
<dbReference type="Pfam" id="PF03079">
    <property type="entry name" value="ARD"/>
    <property type="match status" value="1"/>
</dbReference>
<dbReference type="SUPFAM" id="SSF51182">
    <property type="entry name" value="RmlC-like cupins"/>
    <property type="match status" value="1"/>
</dbReference>
<proteinExistence type="inferred from homology"/>
<organism>
    <name type="scientific">Stenotrophomonas maltophilia (strain R551-3)</name>
    <dbReference type="NCBI Taxonomy" id="391008"/>
    <lineage>
        <taxon>Bacteria</taxon>
        <taxon>Pseudomonadati</taxon>
        <taxon>Pseudomonadota</taxon>
        <taxon>Gammaproteobacteria</taxon>
        <taxon>Lysobacterales</taxon>
        <taxon>Lysobacteraceae</taxon>
        <taxon>Stenotrophomonas</taxon>
        <taxon>Stenotrophomonas maltophilia group</taxon>
    </lineage>
</organism>
<gene>
    <name evidence="1" type="primary">mtnD</name>
    <name type="ordered locus">Smal_1781</name>
</gene>
<evidence type="ECO:0000255" key="1">
    <source>
        <dbReference type="HAMAP-Rule" id="MF_01682"/>
    </source>
</evidence>